<accession>P63239</accession>
<accession>P21662</accession>
<accession>P22546</accession>
<gene>
    <name type="primary">Pcsk1</name>
    <name type="synonym">Att-1</name>
    <name type="synonym">Nec-1</name>
    <name type="synonym">Nec1</name>
</gene>
<keyword id="KW-0002">3D-structure</keyword>
<keyword id="KW-0106">Calcium</keyword>
<keyword id="KW-0165">Cleavage on pair of basic residues</keyword>
<keyword id="KW-0968">Cytoplasmic vesicle</keyword>
<keyword id="KW-0903">Direct protein sequencing</keyword>
<keyword id="KW-1015">Disulfide bond</keyword>
<keyword id="KW-0325">Glycoprotein</keyword>
<keyword id="KW-0378">Hydrolase</keyword>
<keyword id="KW-0645">Protease</keyword>
<keyword id="KW-1185">Reference proteome</keyword>
<keyword id="KW-0720">Serine protease</keyword>
<keyword id="KW-0732">Signal</keyword>
<keyword id="KW-0865">Zymogen</keyword>
<proteinExistence type="evidence at protein level"/>
<dbReference type="EC" id="3.4.21.93"/>
<dbReference type="EMBL" id="M69196">
    <property type="protein sequence ID" value="AAA39732.1"/>
    <property type="molecule type" value="mRNA"/>
</dbReference>
<dbReference type="EMBL" id="X57088">
    <property type="protein sequence ID" value="CAA40368.1"/>
    <property type="molecule type" value="mRNA"/>
</dbReference>
<dbReference type="EMBL" id="M58589">
    <property type="protein sequence ID" value="AAA39894.1"/>
    <property type="molecule type" value="mRNA"/>
</dbReference>
<dbReference type="EMBL" id="M55668">
    <property type="protein sequence ID" value="AAA39375.1"/>
    <property type="status" value="ALT_SEQ"/>
    <property type="molecule type" value="mRNA"/>
</dbReference>
<dbReference type="CCDS" id="CCDS26649.1"/>
<dbReference type="PIR" id="JX0171">
    <property type="entry name" value="KXMSC1"/>
</dbReference>
<dbReference type="RefSeq" id="NP_001413214.1">
    <property type="nucleotide sequence ID" value="NM_001426285.1"/>
</dbReference>
<dbReference type="RefSeq" id="NP_001413216.1">
    <property type="nucleotide sequence ID" value="NM_001426287.1"/>
</dbReference>
<dbReference type="RefSeq" id="NP_038656.1">
    <property type="nucleotide sequence ID" value="NM_013628.3"/>
</dbReference>
<dbReference type="RefSeq" id="XP_006517216.1">
    <property type="nucleotide sequence ID" value="XM_006517153.2"/>
</dbReference>
<dbReference type="RefSeq" id="XP_006517217.1">
    <property type="nucleotide sequence ID" value="XM_006517154.4"/>
</dbReference>
<dbReference type="RefSeq" id="XP_006517218.1">
    <property type="nucleotide sequence ID" value="XM_006517155.2"/>
</dbReference>
<dbReference type="PDB" id="1KN6">
    <property type="method" value="NMR"/>
    <property type="chains" value="A=28-110"/>
</dbReference>
<dbReference type="PDB" id="2KDT">
    <property type="method" value="NMR"/>
    <property type="chains" value="A=711-753"/>
</dbReference>
<dbReference type="PDB" id="2KE3">
    <property type="method" value="NMR"/>
    <property type="chains" value="A=711-753"/>
</dbReference>
<dbReference type="PDBsum" id="1KN6"/>
<dbReference type="PDBsum" id="2KDT"/>
<dbReference type="PDBsum" id="2KE3"/>
<dbReference type="BMRB" id="P63239"/>
<dbReference type="SMR" id="P63239"/>
<dbReference type="BioGRID" id="202057">
    <property type="interactions" value="4"/>
</dbReference>
<dbReference type="DIP" id="DIP-48841N"/>
<dbReference type="FunCoup" id="P63239">
    <property type="interactions" value="57"/>
</dbReference>
<dbReference type="STRING" id="10090.ENSMUSP00000022075"/>
<dbReference type="MEROPS" id="S08.072"/>
<dbReference type="GlyCosmos" id="P63239">
    <property type="glycosylation" value="2 sites, No reported glycans"/>
</dbReference>
<dbReference type="GlyGen" id="P63239">
    <property type="glycosylation" value="2 sites, 1 N-linked glycan (1 site)"/>
</dbReference>
<dbReference type="iPTMnet" id="P63239"/>
<dbReference type="PhosphoSitePlus" id="P63239"/>
<dbReference type="PaxDb" id="10090-ENSMUSP00000022075"/>
<dbReference type="PeptideAtlas" id="P63239"/>
<dbReference type="ProteomicsDB" id="253052"/>
<dbReference type="Antibodypedia" id="13091">
    <property type="antibodies" value="175 antibodies from 31 providers"/>
</dbReference>
<dbReference type="DNASU" id="18548"/>
<dbReference type="Ensembl" id="ENSMUST00000022075.6">
    <property type="protein sequence ID" value="ENSMUSP00000022075.5"/>
    <property type="gene ID" value="ENSMUSG00000021587.6"/>
</dbReference>
<dbReference type="GeneID" id="18548"/>
<dbReference type="KEGG" id="mmu:18548"/>
<dbReference type="UCSC" id="uc007rfs.1">
    <property type="organism name" value="mouse"/>
</dbReference>
<dbReference type="AGR" id="MGI:97511"/>
<dbReference type="CTD" id="5122"/>
<dbReference type="MGI" id="MGI:97511">
    <property type="gene designation" value="Pcsk1"/>
</dbReference>
<dbReference type="VEuPathDB" id="HostDB:ENSMUSG00000021587"/>
<dbReference type="eggNOG" id="KOG3525">
    <property type="taxonomic scope" value="Eukaryota"/>
</dbReference>
<dbReference type="GeneTree" id="ENSGT00940000157385"/>
<dbReference type="HOGENOM" id="CLU_002976_4_1_1"/>
<dbReference type="InParanoid" id="P63239"/>
<dbReference type="OMA" id="NDPMWSQ"/>
<dbReference type="OrthoDB" id="300641at2759"/>
<dbReference type="PhylomeDB" id="P63239"/>
<dbReference type="TreeFam" id="TF314277"/>
<dbReference type="BRENDA" id="3.4.21.93">
    <property type="organism ID" value="3474"/>
</dbReference>
<dbReference type="Reactome" id="R-MMU-209952">
    <property type="pathway name" value="Peptide hormone biosynthesis"/>
</dbReference>
<dbReference type="Reactome" id="R-MMU-422085">
    <property type="pathway name" value="Synthesis, secretion, and deacylation of Ghrelin"/>
</dbReference>
<dbReference type="BioGRID-ORCS" id="18548">
    <property type="hits" value="2 hits in 79 CRISPR screens"/>
</dbReference>
<dbReference type="EvolutionaryTrace" id="P63239"/>
<dbReference type="PRO" id="PR:P63239"/>
<dbReference type="Proteomes" id="UP000000589">
    <property type="component" value="Chromosome 13"/>
</dbReference>
<dbReference type="RNAct" id="P63239">
    <property type="molecule type" value="protein"/>
</dbReference>
<dbReference type="Bgee" id="ENSMUSG00000021587">
    <property type="expression patterns" value="Expressed in supraoptic nucleus and 75 other cell types or tissues"/>
</dbReference>
<dbReference type="ExpressionAtlas" id="P63239">
    <property type="expression patterns" value="baseline and differential"/>
</dbReference>
<dbReference type="GO" id="GO:0005788">
    <property type="term" value="C:endoplasmic reticulum lumen"/>
    <property type="evidence" value="ECO:0000304"/>
    <property type="project" value="Reactome"/>
</dbReference>
<dbReference type="GO" id="GO:0005615">
    <property type="term" value="C:extracellular space"/>
    <property type="evidence" value="ECO:0000314"/>
    <property type="project" value="BHF-UCL"/>
</dbReference>
<dbReference type="GO" id="GO:0030141">
    <property type="term" value="C:secretory granule"/>
    <property type="evidence" value="ECO:0000314"/>
    <property type="project" value="MGI"/>
</dbReference>
<dbReference type="GO" id="GO:0034774">
    <property type="term" value="C:secretory granule lumen"/>
    <property type="evidence" value="ECO:0000304"/>
    <property type="project" value="Reactome"/>
</dbReference>
<dbReference type="GO" id="GO:0030133">
    <property type="term" value="C:transport vesicle"/>
    <property type="evidence" value="ECO:0007669"/>
    <property type="project" value="UniProtKB-SubCell"/>
</dbReference>
<dbReference type="GO" id="GO:0004175">
    <property type="term" value="F:endopeptidase activity"/>
    <property type="evidence" value="ECO:0000314"/>
    <property type="project" value="BHF-UCL"/>
</dbReference>
<dbReference type="GO" id="GO:0042802">
    <property type="term" value="F:identical protein binding"/>
    <property type="evidence" value="ECO:0000353"/>
    <property type="project" value="IntAct"/>
</dbReference>
<dbReference type="GO" id="GO:0004252">
    <property type="term" value="F:serine-type endopeptidase activity"/>
    <property type="evidence" value="ECO:0000314"/>
    <property type="project" value="BHF-UCL"/>
</dbReference>
<dbReference type="GO" id="GO:0030070">
    <property type="term" value="P:insulin processing"/>
    <property type="evidence" value="ECO:0000315"/>
    <property type="project" value="MGI"/>
</dbReference>
<dbReference type="GO" id="GO:0043043">
    <property type="term" value="P:peptide biosynthetic process"/>
    <property type="evidence" value="ECO:0000314"/>
    <property type="project" value="BHF-UCL"/>
</dbReference>
<dbReference type="GO" id="GO:0016486">
    <property type="term" value="P:peptide hormone processing"/>
    <property type="evidence" value="ECO:0000314"/>
    <property type="project" value="BHF-UCL"/>
</dbReference>
<dbReference type="GO" id="GO:0016485">
    <property type="term" value="P:protein processing"/>
    <property type="evidence" value="ECO:0000314"/>
    <property type="project" value="BHF-UCL"/>
</dbReference>
<dbReference type="CDD" id="cd04059">
    <property type="entry name" value="Peptidases_S8_Protein_convertases_Kexins_Furin-like"/>
    <property type="match status" value="1"/>
</dbReference>
<dbReference type="FunFam" id="6.10.250.3320:FF:000001">
    <property type="entry name" value="neuroendocrine convertase 1"/>
    <property type="match status" value="1"/>
</dbReference>
<dbReference type="FunFam" id="2.60.120.260:FF:000054">
    <property type="entry name" value="Proprotein convertase subtilisin/kexin type 1"/>
    <property type="match status" value="1"/>
</dbReference>
<dbReference type="FunFam" id="3.30.70.850:FF:000001">
    <property type="entry name" value="Proprotein convertase subtilisin/kexin type 5"/>
    <property type="match status" value="1"/>
</dbReference>
<dbReference type="FunFam" id="3.40.50.200:FF:000010">
    <property type="entry name" value="Putative neuroendocrine convertase 1"/>
    <property type="match status" value="1"/>
</dbReference>
<dbReference type="Gene3D" id="6.10.250.3320">
    <property type="match status" value="1"/>
</dbReference>
<dbReference type="Gene3D" id="2.60.120.260">
    <property type="entry name" value="Galactose-binding domain-like"/>
    <property type="match status" value="1"/>
</dbReference>
<dbReference type="Gene3D" id="3.30.70.850">
    <property type="entry name" value="Peptidase S8, pro-domain"/>
    <property type="match status" value="1"/>
</dbReference>
<dbReference type="Gene3D" id="3.40.50.200">
    <property type="entry name" value="Peptidase S8/S53 domain"/>
    <property type="match status" value="1"/>
</dbReference>
<dbReference type="InterPro" id="IPR008979">
    <property type="entry name" value="Galactose-bd-like_sf"/>
</dbReference>
<dbReference type="InterPro" id="IPR034182">
    <property type="entry name" value="Kexin/furin"/>
</dbReference>
<dbReference type="InterPro" id="IPR002884">
    <property type="entry name" value="P_dom"/>
</dbReference>
<dbReference type="InterPro" id="IPR000209">
    <property type="entry name" value="Peptidase_S8/S53_dom"/>
</dbReference>
<dbReference type="InterPro" id="IPR036852">
    <property type="entry name" value="Peptidase_S8/S53_dom_sf"/>
</dbReference>
<dbReference type="InterPro" id="IPR023827">
    <property type="entry name" value="Peptidase_S8_Asp-AS"/>
</dbReference>
<dbReference type="InterPro" id="IPR022398">
    <property type="entry name" value="Peptidase_S8_His-AS"/>
</dbReference>
<dbReference type="InterPro" id="IPR023828">
    <property type="entry name" value="Peptidase_S8_Ser-AS"/>
</dbReference>
<dbReference type="InterPro" id="IPR015500">
    <property type="entry name" value="Peptidase_S8_subtilisin-rel"/>
</dbReference>
<dbReference type="InterPro" id="IPR022005">
    <property type="entry name" value="Proho_convert"/>
</dbReference>
<dbReference type="InterPro" id="IPR032815">
    <property type="entry name" value="S8_pro-domain"/>
</dbReference>
<dbReference type="InterPro" id="IPR038466">
    <property type="entry name" value="S8_pro-domain_sf"/>
</dbReference>
<dbReference type="PANTHER" id="PTHR42884:SF14">
    <property type="entry name" value="NEUROENDOCRINE CONVERTASE 1"/>
    <property type="match status" value="1"/>
</dbReference>
<dbReference type="PANTHER" id="PTHR42884">
    <property type="entry name" value="PROPROTEIN CONVERTASE SUBTILISIN/KEXIN-RELATED"/>
    <property type="match status" value="1"/>
</dbReference>
<dbReference type="Pfam" id="PF01483">
    <property type="entry name" value="P_proprotein"/>
    <property type="match status" value="1"/>
</dbReference>
<dbReference type="Pfam" id="PF00082">
    <property type="entry name" value="Peptidase_S8"/>
    <property type="match status" value="1"/>
</dbReference>
<dbReference type="Pfam" id="PF12177">
    <property type="entry name" value="Proho_convert"/>
    <property type="match status" value="1"/>
</dbReference>
<dbReference type="Pfam" id="PF16470">
    <property type="entry name" value="S8_pro-domain"/>
    <property type="match status" value="1"/>
</dbReference>
<dbReference type="PRINTS" id="PR00723">
    <property type="entry name" value="SUBTILISIN"/>
</dbReference>
<dbReference type="SUPFAM" id="SSF49785">
    <property type="entry name" value="Galactose-binding domain-like"/>
    <property type="match status" value="1"/>
</dbReference>
<dbReference type="SUPFAM" id="SSF54897">
    <property type="entry name" value="Protease propeptides/inhibitors"/>
    <property type="match status" value="1"/>
</dbReference>
<dbReference type="SUPFAM" id="SSF52743">
    <property type="entry name" value="Subtilisin-like"/>
    <property type="match status" value="1"/>
</dbReference>
<dbReference type="PROSITE" id="PS51829">
    <property type="entry name" value="P_HOMO_B"/>
    <property type="match status" value="1"/>
</dbReference>
<dbReference type="PROSITE" id="PS51892">
    <property type="entry name" value="SUBTILASE"/>
    <property type="match status" value="1"/>
</dbReference>
<dbReference type="PROSITE" id="PS00136">
    <property type="entry name" value="SUBTILASE_ASP"/>
    <property type="match status" value="1"/>
</dbReference>
<dbReference type="PROSITE" id="PS00137">
    <property type="entry name" value="SUBTILASE_HIS"/>
    <property type="match status" value="1"/>
</dbReference>
<dbReference type="PROSITE" id="PS00138">
    <property type="entry name" value="SUBTILASE_SER"/>
    <property type="match status" value="1"/>
</dbReference>
<comment type="function">
    <text evidence="6">Involved in the processing of hormone and other protein precursors at sites comprised of pairs of basic amino acid residues. Substrates include POMC, renin, enkephalin, dynorphin, somatostatin, insulin and AGRP.</text>
</comment>
<comment type="catalytic activity">
    <reaction>
        <text>Release of protein hormones, neuropeptides and renin from their precursors, generally by hydrolysis of -Lys-Arg-|- bonds.</text>
        <dbReference type="EC" id="3.4.21.93"/>
    </reaction>
</comment>
<comment type="cofactor">
    <cofactor>
        <name>Ca(2+)</name>
        <dbReference type="ChEBI" id="CHEBI:29108"/>
    </cofactor>
</comment>
<comment type="biophysicochemical properties">
    <phDependence>
        <text>Optimum pH is 5.5-6.5.</text>
    </phDependence>
</comment>
<comment type="interaction">
    <interactant intactId="EBI-15770815">
        <id>P63239</id>
    </interactant>
    <interactant intactId="EBI-15770815">
        <id>P63239</id>
        <label>Pcsk1</label>
    </interactant>
    <organismsDiffer>false</organismsDiffer>
    <experiments>2</experiments>
</comment>
<comment type="subcellular location">
    <subcellularLocation>
        <location>Cytoplasmic vesicle</location>
        <location>Secretory vesicle</location>
    </subcellularLocation>
    <text>Localized in the secretion granules.</text>
</comment>
<comment type="disruption phenotype">
    <text evidence="6">Increase in unprocessed AGRP.</text>
</comment>
<comment type="similarity">
    <text evidence="7">Belongs to the peptidase S8 family. Furin subfamily.</text>
</comment>
<name>NEC1_MOUSE</name>
<protein>
    <recommendedName>
        <fullName>Neuroendocrine convertase 1</fullName>
        <shortName>NEC 1</shortName>
        <ecNumber>3.4.21.93</ecNumber>
    </recommendedName>
    <alternativeName>
        <fullName>Furin homolog</fullName>
    </alternativeName>
    <alternativeName>
        <fullName>PC3</fullName>
    </alternativeName>
    <alternativeName>
        <fullName>Prohormone convertase 1</fullName>
    </alternativeName>
    <alternativeName>
        <fullName>Propeptide-processing protease</fullName>
    </alternativeName>
    <alternativeName>
        <fullName>Proprotein convertase 1</fullName>
        <shortName>PC1</shortName>
    </alternativeName>
</protein>
<evidence type="ECO:0000250" key="1"/>
<evidence type="ECO:0000255" key="2"/>
<evidence type="ECO:0000255" key="3">
    <source>
        <dbReference type="PROSITE-ProRule" id="PRU01173"/>
    </source>
</evidence>
<evidence type="ECO:0000255" key="4">
    <source>
        <dbReference type="PROSITE-ProRule" id="PRU01240"/>
    </source>
</evidence>
<evidence type="ECO:0000256" key="5">
    <source>
        <dbReference type="SAM" id="MobiDB-lite"/>
    </source>
</evidence>
<evidence type="ECO:0000269" key="6">
    <source>
    </source>
</evidence>
<evidence type="ECO:0000305" key="7"/>
<evidence type="ECO:0007829" key="8">
    <source>
        <dbReference type="PDB" id="1KN6"/>
    </source>
</evidence>
<evidence type="ECO:0007829" key="9">
    <source>
        <dbReference type="PDB" id="2KDT"/>
    </source>
</evidence>
<evidence type="ECO:0007829" key="10">
    <source>
        <dbReference type="PDB" id="2KE3"/>
    </source>
</evidence>
<feature type="signal peptide" evidence="2">
    <location>
        <begin position="1"/>
        <end position="27"/>
    </location>
</feature>
<feature type="propeptide" id="PRO_0000027059" evidence="2">
    <location>
        <begin position="28"/>
        <end position="110"/>
    </location>
</feature>
<feature type="chain" id="PRO_0000027060" description="Neuroendocrine convertase 1">
    <location>
        <begin position="111"/>
        <end position="753"/>
    </location>
</feature>
<feature type="domain" description="Peptidase S8" evidence="4">
    <location>
        <begin position="129"/>
        <end position="450"/>
    </location>
</feature>
<feature type="domain" description="P/Homo B" evidence="3">
    <location>
        <begin position="460"/>
        <end position="597"/>
    </location>
</feature>
<feature type="region of interest" description="Disordered" evidence="5">
    <location>
        <begin position="633"/>
        <end position="663"/>
    </location>
</feature>
<feature type="compositionally biased region" description="Polar residues" evidence="5">
    <location>
        <begin position="633"/>
        <end position="651"/>
    </location>
</feature>
<feature type="active site" description="Charge relay system" evidence="4">
    <location>
        <position position="167"/>
    </location>
</feature>
<feature type="active site" description="Charge relay system" evidence="4">
    <location>
        <position position="208"/>
    </location>
</feature>
<feature type="active site" description="Charge relay system" evidence="4">
    <location>
        <position position="382"/>
    </location>
</feature>
<feature type="glycosylation site" description="N-linked (GlcNAc...) asparagine" evidence="2">
    <location>
        <position position="401"/>
    </location>
</feature>
<feature type="glycosylation site" description="N-linked (GlcNAc...) asparagine" evidence="2">
    <location>
        <position position="645"/>
    </location>
</feature>
<feature type="disulfide bond" evidence="1">
    <location>
        <begin position="225"/>
        <end position="374"/>
    </location>
</feature>
<feature type="disulfide bond" evidence="1">
    <location>
        <begin position="317"/>
        <end position="347"/>
    </location>
</feature>
<feature type="disulfide bond" evidence="1">
    <location>
        <begin position="467"/>
        <end position="494"/>
    </location>
</feature>
<feature type="sequence conflict" description="In Ref. 2; CAA40368." evidence="7" ref="2">
    <original>V</original>
    <variation>F</variation>
    <location>
        <position position="112"/>
    </location>
</feature>
<feature type="sequence conflict" description="In Ref. 2; CAA40368." evidence="7" ref="2">
    <original>A</original>
    <variation>P</variation>
    <location>
        <position position="117"/>
    </location>
</feature>
<feature type="sequence conflict" description="In Ref. 2; CAA40368." evidence="7" ref="2">
    <original>N</original>
    <variation>T</variation>
    <location>
        <position position="122"/>
    </location>
</feature>
<feature type="sequence conflict" description="In Ref. 2; CAA40368." evidence="7" ref="2">
    <original>Q</original>
    <variation>H</variation>
    <location>
        <position position="128"/>
    </location>
</feature>
<feature type="sequence conflict" description="In Ref. 2; CAA40368." evidence="7" ref="2">
    <original>R</original>
    <variation>K</variation>
    <location>
        <position position="282"/>
    </location>
</feature>
<feature type="sequence conflict" description="In Ref. 3; AAA39375." evidence="7" ref="3">
    <original>S</original>
    <variation>L</variation>
    <location>
        <position position="330"/>
    </location>
</feature>
<feature type="sequence conflict" description="In Ref. 2; CAA40368." evidence="7" ref="2">
    <original>K</original>
    <variation>E</variation>
    <location>
        <position position="732"/>
    </location>
</feature>
<feature type="strand" evidence="8">
    <location>
        <begin position="35"/>
        <end position="38"/>
    </location>
</feature>
<feature type="helix" evidence="8">
    <location>
        <begin position="43"/>
        <end position="53"/>
    </location>
</feature>
<feature type="strand" evidence="8">
    <location>
        <begin position="62"/>
        <end position="65"/>
    </location>
</feature>
<feature type="strand" evidence="8">
    <location>
        <begin position="67"/>
        <end position="71"/>
    </location>
</feature>
<feature type="strand" evidence="8">
    <location>
        <begin position="77"/>
        <end position="79"/>
    </location>
</feature>
<feature type="helix" evidence="8">
    <location>
        <begin position="89"/>
        <end position="94"/>
    </location>
</feature>
<feature type="strand" evidence="8">
    <location>
        <begin position="97"/>
        <end position="100"/>
    </location>
</feature>
<feature type="strand" evidence="9">
    <location>
        <begin position="713"/>
        <end position="716"/>
    </location>
</feature>
<feature type="strand" evidence="10">
    <location>
        <begin position="718"/>
        <end position="721"/>
    </location>
</feature>
<feature type="helix" evidence="9">
    <location>
        <begin position="722"/>
        <end position="726"/>
    </location>
</feature>
<feature type="turn" evidence="9">
    <location>
        <begin position="727"/>
        <end position="730"/>
    </location>
</feature>
<feature type="helix" evidence="9">
    <location>
        <begin position="741"/>
        <end position="748"/>
    </location>
</feature>
<feature type="turn" evidence="9">
    <location>
        <begin position="749"/>
        <end position="751"/>
    </location>
</feature>
<organism>
    <name type="scientific">Mus musculus</name>
    <name type="common">Mouse</name>
    <dbReference type="NCBI Taxonomy" id="10090"/>
    <lineage>
        <taxon>Eukaryota</taxon>
        <taxon>Metazoa</taxon>
        <taxon>Chordata</taxon>
        <taxon>Craniata</taxon>
        <taxon>Vertebrata</taxon>
        <taxon>Euteleostomi</taxon>
        <taxon>Mammalia</taxon>
        <taxon>Eutheria</taxon>
        <taxon>Euarchontoglires</taxon>
        <taxon>Glires</taxon>
        <taxon>Rodentia</taxon>
        <taxon>Myomorpha</taxon>
        <taxon>Muroidea</taxon>
        <taxon>Muridae</taxon>
        <taxon>Murinae</taxon>
        <taxon>Mus</taxon>
        <taxon>Mus</taxon>
    </lineage>
</organism>
<sequence length="753" mass="84174">MEQRGWTLQCTAFAFFCVWCALNSVKAKRQFVNEWAAEIPGGQEAASAIAEELGYDLLGQIGSLENHYLFKHKSHPRRSRRSALHITKRLSDDDRVTWAEQQYEKERSKRSVQKDSALDLFNDPMWNQQWYLQDTRMTAALPKLDLHVIPVWEKGITGKGVVITVLDDGLEWNHTDIYANYDPEASYDFNDNDHDPFPRYDLTNENKHGTRCAGEIAMQANNHKCGVGVAYNSKVGGIRMLDGIVTDAIEASSIGFNPGHVDIYSASWGPNDDGKTVEGPGRLAQKAFEYGVKQGRQGKGSIFVWASGNGGRQGDNCDCDGYTDSIYTISISSASQQGLSPWYAEKCSSTLATSYSSGDYTDQRITSADLHNDCTETHTGTSASAPLAAGIFALALEANPNLTWRDMQHLVVWTSEYDPLASNPGWKKNGAGLMVNSRFGFGLLNAKALVDLADPRTWRNVPEKKECVVKDNNFEPRALKANGEVIVEIPTRACEGQENAIKSLEHVQFEATIEYSRRGDLHVTLTSAVGTSTVLLAERERDTSPNGFKNWDFMSVHTWGENPVGTWTLKITDMSGRMQNEGRIVNWKLILHGTSSQPEHMKQPRVYTSYNTVQNDRRGVEKMVNVVEKRPTQKSLNGNLLVPKNSSSSNVEGRRDEQVQGTPSKAMLRLLQSAFSKNALSKQSPKKSPSAKLSIPYESFYEALEKLNKPSKLEGSEDSLYSDYVDVFYNTKPYKHRDDRLLQALMDILNEEN</sequence>
<reference key="1">
    <citation type="journal article" date="1991" name="Proc. Natl. Acad. Sci. U.S.A.">
        <title>Isolation and functional expression of a mammalian prohormone processing enzyme, murine prohormone convertase 1.</title>
        <authorList>
            <person name="Korner J."/>
            <person name="Chun J."/>
            <person name="Harter D."/>
            <person name="Axel R."/>
        </authorList>
    </citation>
    <scope>NUCLEOTIDE SEQUENCE [MRNA]</scope>
    <source>
        <tissue>Pituitary</tissue>
    </source>
</reference>
<reference key="2">
    <citation type="journal article" date="1991" name="J. Biochem.">
        <title>Cloning and functional expression of a novel endoprotease involved in prohormone processing at dibasic sites.</title>
        <authorList>
            <person name="Nakayama K."/>
            <person name="Hosaka M."/>
            <person name="Hatsuzawa K."/>
            <person name="Murakami K."/>
        </authorList>
    </citation>
    <scope>NUCLEOTIDE SEQUENCE [MRNA]</scope>
    <source>
        <strain>LAF1</strain>
    </source>
</reference>
<reference key="3">
    <citation type="journal article" date="1991" name="Mol. Endocrinol.">
        <title>Cloning and primary sequence of a mouse candidate prohormone convertase PC1 homologous to PC2, Furin, and Kex2: distinct chromosomal localization and messenger RNA distribution in brain and pituitary compared to PC2.</title>
        <authorList>
            <person name="Seidah N.G."/>
            <person name="Marcinkiewicz M."/>
            <person name="Benjannet S."/>
            <person name="Gaspar L."/>
            <person name="Beaubien G."/>
            <person name="Mattei M.-G."/>
            <person name="Lazure C."/>
            <person name="Mbikay M."/>
            <person name="Chretien M."/>
        </authorList>
    </citation>
    <scope>NUCLEOTIDE SEQUENCE [MRNA]</scope>
    <source>
        <strain>BALB/cJ</strain>
        <tissue>Pituitary</tissue>
    </source>
</reference>
<reference key="4">
    <citation type="journal article" date="1993" name="J. Biol. Chem.">
        <title>Purification and characterization of the prohormone convertase PC1(PC3).</title>
        <authorList>
            <person name="Zhou Y."/>
            <person name="Lindberg I."/>
        </authorList>
    </citation>
    <scope>PROTEIN SEQUENCE OF 111-120</scope>
    <source>
        <tissue>Ovary</tissue>
    </source>
</reference>
<reference key="5">
    <citation type="journal article" date="1990" name="DNA Cell Biol.">
        <title>cDNA sequence of two distinct pituitary proteins homologous to Kex2 and furin gene products: tissue-specific mRNAs encoding candidates for pro-hormone processing proteinases.</title>
        <authorList>
            <person name="Seidah N.G."/>
            <person name="Gaspar L."/>
            <person name="Mion P."/>
            <person name="Marcinkiewicz M."/>
            <person name="Mbikay M."/>
            <person name="Chretien M."/>
        </authorList>
    </citation>
    <scope>NUCLEOTIDE SEQUENCE [MRNA] OF 214-478</scope>
    <source>
        <tissue>Pituitary</tissue>
    </source>
</reference>
<reference key="6">
    <citation type="journal article" date="1990" name="DNA Cell Biol.">
        <authorList>
            <person name="Seidah N.G."/>
            <person name="Gaspar L."/>
            <person name="Mion P."/>
            <person name="Marcinkiewicz M."/>
            <person name="Mbikay M."/>
            <person name="Chretien M."/>
        </authorList>
    </citation>
    <scope>ERRATUM OF PUBMED:2169760</scope>
</reference>
<reference key="7">
    <citation type="journal article" date="2006" name="Endocrinology">
        <title>Agouti-related protein is posttranslationally cleaved by proprotein convertase 1 to generate agouti-related protein (AGRP)83-132: interaction between AGRP83-132 and melanocortin receptors cannot be influenced by syndecan-3.</title>
        <authorList>
            <person name="Creemers J.W."/>
            <person name="Pritchard L.E."/>
            <person name="Gyte A."/>
            <person name="Le Rouzic P."/>
            <person name="Meulemans S."/>
            <person name="Wardlaw S.L."/>
            <person name="Zhu X."/>
            <person name="Steiner D.F."/>
            <person name="Davies N."/>
            <person name="Armstrong D."/>
            <person name="Lawrence C.B."/>
            <person name="Luckman S.M."/>
            <person name="Schmitz C.A."/>
            <person name="Davies R.A."/>
            <person name="Brennand J.C."/>
            <person name="White A."/>
        </authorList>
    </citation>
    <scope>FUNCTION</scope>
    <scope>DISRUPTION PHENOTYPE</scope>
</reference>
<reference key="8">
    <citation type="journal article" date="2002" name="J. Mol. Biol.">
        <title>Solution structure of the pro-hormone convertase 1 pro-domain from Mus musculus.</title>
        <authorList>
            <person name="Tangrea M.A."/>
            <person name="Bryan P.N."/>
            <person name="Sari N."/>
            <person name="Orban J."/>
        </authorList>
    </citation>
    <scope>STRUCTURE BY NMR OF 28-110</scope>
</reference>